<name>UBIE_GEOUR</name>
<proteinExistence type="inferred from homology"/>
<gene>
    <name evidence="1" type="primary">ubiE</name>
    <name type="ordered locus">Gura_1366</name>
</gene>
<evidence type="ECO:0000255" key="1">
    <source>
        <dbReference type="HAMAP-Rule" id="MF_01813"/>
    </source>
</evidence>
<accession>A5GA37</accession>
<comment type="function">
    <text evidence="1">Methyltransferase required for the conversion of demethylmenaquinol (DMKH2) to menaquinol (MKH2) and the conversion of 2-polyprenyl-6-methoxy-1,4-benzoquinol (DDMQH2) to 2-polyprenyl-3-methyl-6-methoxy-1,4-benzoquinol (DMQH2).</text>
</comment>
<comment type="catalytic activity">
    <reaction evidence="1">
        <text>a 2-demethylmenaquinol + S-adenosyl-L-methionine = a menaquinol + S-adenosyl-L-homocysteine + H(+)</text>
        <dbReference type="Rhea" id="RHEA:42640"/>
        <dbReference type="Rhea" id="RHEA-COMP:9539"/>
        <dbReference type="Rhea" id="RHEA-COMP:9563"/>
        <dbReference type="ChEBI" id="CHEBI:15378"/>
        <dbReference type="ChEBI" id="CHEBI:18151"/>
        <dbReference type="ChEBI" id="CHEBI:55437"/>
        <dbReference type="ChEBI" id="CHEBI:57856"/>
        <dbReference type="ChEBI" id="CHEBI:59789"/>
        <dbReference type="EC" id="2.1.1.163"/>
    </reaction>
</comment>
<comment type="catalytic activity">
    <reaction evidence="1">
        <text>a 2-methoxy-6-(all-trans-polyprenyl)benzene-1,4-diol + S-adenosyl-L-methionine = a 5-methoxy-2-methyl-3-(all-trans-polyprenyl)benzene-1,4-diol + S-adenosyl-L-homocysteine + H(+)</text>
        <dbReference type="Rhea" id="RHEA:28286"/>
        <dbReference type="Rhea" id="RHEA-COMP:10858"/>
        <dbReference type="Rhea" id="RHEA-COMP:10859"/>
        <dbReference type="ChEBI" id="CHEBI:15378"/>
        <dbReference type="ChEBI" id="CHEBI:57856"/>
        <dbReference type="ChEBI" id="CHEBI:59789"/>
        <dbReference type="ChEBI" id="CHEBI:84166"/>
        <dbReference type="ChEBI" id="CHEBI:84167"/>
        <dbReference type="EC" id="2.1.1.201"/>
    </reaction>
</comment>
<comment type="pathway">
    <text evidence="1">Quinol/quinone metabolism; menaquinone biosynthesis; menaquinol from 1,4-dihydroxy-2-naphthoate: step 2/2.</text>
</comment>
<comment type="pathway">
    <text evidence="1">Cofactor biosynthesis; ubiquinone biosynthesis.</text>
</comment>
<comment type="similarity">
    <text evidence="1">Belongs to the class I-like SAM-binding methyltransferase superfamily. MenG/UbiE family.</text>
</comment>
<keyword id="KW-0474">Menaquinone biosynthesis</keyword>
<keyword id="KW-0489">Methyltransferase</keyword>
<keyword id="KW-1185">Reference proteome</keyword>
<keyword id="KW-0949">S-adenosyl-L-methionine</keyword>
<keyword id="KW-0808">Transferase</keyword>
<keyword id="KW-0831">Ubiquinone biosynthesis</keyword>
<organism>
    <name type="scientific">Geotalea uraniireducens (strain Rf4)</name>
    <name type="common">Geobacter uraniireducens</name>
    <dbReference type="NCBI Taxonomy" id="351605"/>
    <lineage>
        <taxon>Bacteria</taxon>
        <taxon>Pseudomonadati</taxon>
        <taxon>Thermodesulfobacteriota</taxon>
        <taxon>Desulfuromonadia</taxon>
        <taxon>Geobacterales</taxon>
        <taxon>Geobacteraceae</taxon>
        <taxon>Geotalea</taxon>
    </lineage>
</organism>
<sequence>MFKLTEKGEKIQEMFDTIAPRYDFLNRLLSFGIDRKWRRFAVKQIRYAEGGRILDVATGTGDVALEIAAQTPASISIVGVDFSKEMVELGKEKVNCSPFAARISMQVAPCEAIPFADGSFDSVTIAFGIRNVVDRAQGLKEMHRILKADGRAVILEFSTPRLTLFKALYHFYFLKVLPVIGGLFSQFSAYKYLPDSVMEFPSQEEFKAIMAGVGFKNLKHFDLTGGIATVYVGEK</sequence>
<protein>
    <recommendedName>
        <fullName evidence="1">Ubiquinone/menaquinone biosynthesis C-methyltransferase UbiE</fullName>
        <ecNumber evidence="1">2.1.1.163</ecNumber>
        <ecNumber evidence="1">2.1.1.201</ecNumber>
    </recommendedName>
    <alternativeName>
        <fullName evidence="1">2-methoxy-6-polyprenyl-1,4-benzoquinol methylase</fullName>
    </alternativeName>
    <alternativeName>
        <fullName evidence="1">Demethylmenaquinone methyltransferase</fullName>
    </alternativeName>
</protein>
<reference key="1">
    <citation type="submission" date="2007-05" db="EMBL/GenBank/DDBJ databases">
        <title>Complete sequence of Geobacter uraniireducens Rf4.</title>
        <authorList>
            <consortium name="US DOE Joint Genome Institute"/>
            <person name="Copeland A."/>
            <person name="Lucas S."/>
            <person name="Lapidus A."/>
            <person name="Barry K."/>
            <person name="Detter J.C."/>
            <person name="Glavina del Rio T."/>
            <person name="Hammon N."/>
            <person name="Israni S."/>
            <person name="Dalin E."/>
            <person name="Tice H."/>
            <person name="Pitluck S."/>
            <person name="Chertkov O."/>
            <person name="Brettin T."/>
            <person name="Bruce D."/>
            <person name="Han C."/>
            <person name="Schmutz J."/>
            <person name="Larimer F."/>
            <person name="Land M."/>
            <person name="Hauser L."/>
            <person name="Kyrpides N."/>
            <person name="Mikhailova N."/>
            <person name="Shelobolina E."/>
            <person name="Aklujkar M."/>
            <person name="Lovley D."/>
            <person name="Richardson P."/>
        </authorList>
    </citation>
    <scope>NUCLEOTIDE SEQUENCE [LARGE SCALE GENOMIC DNA]</scope>
    <source>
        <strain>ATCC BAA-1134 / JCM 13001 / Rf4</strain>
    </source>
</reference>
<feature type="chain" id="PRO_1000187771" description="Ubiquinone/menaquinone biosynthesis C-methyltransferase UbiE">
    <location>
        <begin position="1"/>
        <end position="235"/>
    </location>
</feature>
<feature type="binding site" evidence="1">
    <location>
        <position position="60"/>
    </location>
    <ligand>
        <name>S-adenosyl-L-methionine</name>
        <dbReference type="ChEBI" id="CHEBI:59789"/>
    </ligand>
</feature>
<feature type="binding site" evidence="1">
    <location>
        <position position="81"/>
    </location>
    <ligand>
        <name>S-adenosyl-L-methionine</name>
        <dbReference type="ChEBI" id="CHEBI:59789"/>
    </ligand>
</feature>
<dbReference type="EC" id="2.1.1.163" evidence="1"/>
<dbReference type="EC" id="2.1.1.201" evidence="1"/>
<dbReference type="EMBL" id="CP000698">
    <property type="protein sequence ID" value="ABQ25567.1"/>
    <property type="molecule type" value="Genomic_DNA"/>
</dbReference>
<dbReference type="RefSeq" id="WP_011938284.1">
    <property type="nucleotide sequence ID" value="NC_009483.1"/>
</dbReference>
<dbReference type="SMR" id="A5GA37"/>
<dbReference type="STRING" id="351605.Gura_1366"/>
<dbReference type="KEGG" id="gur:Gura_1366"/>
<dbReference type="HOGENOM" id="CLU_037990_0_0_7"/>
<dbReference type="OrthoDB" id="9808140at2"/>
<dbReference type="UniPathway" id="UPA00079">
    <property type="reaction ID" value="UER00169"/>
</dbReference>
<dbReference type="UniPathway" id="UPA00232"/>
<dbReference type="Proteomes" id="UP000006695">
    <property type="component" value="Chromosome"/>
</dbReference>
<dbReference type="GO" id="GO:0008425">
    <property type="term" value="F:2-methoxy-6-polyprenyl-1,4-benzoquinol methyltransferase activity"/>
    <property type="evidence" value="ECO:0007669"/>
    <property type="project" value="UniProtKB-EC"/>
</dbReference>
<dbReference type="GO" id="GO:0043770">
    <property type="term" value="F:demethylmenaquinone methyltransferase activity"/>
    <property type="evidence" value="ECO:0007669"/>
    <property type="project" value="UniProtKB-UniRule"/>
</dbReference>
<dbReference type="GO" id="GO:0009234">
    <property type="term" value="P:menaquinone biosynthetic process"/>
    <property type="evidence" value="ECO:0007669"/>
    <property type="project" value="UniProtKB-UniRule"/>
</dbReference>
<dbReference type="GO" id="GO:0032259">
    <property type="term" value="P:methylation"/>
    <property type="evidence" value="ECO:0007669"/>
    <property type="project" value="UniProtKB-KW"/>
</dbReference>
<dbReference type="CDD" id="cd02440">
    <property type="entry name" value="AdoMet_MTases"/>
    <property type="match status" value="1"/>
</dbReference>
<dbReference type="Gene3D" id="3.40.50.150">
    <property type="entry name" value="Vaccinia Virus protein VP39"/>
    <property type="match status" value="1"/>
</dbReference>
<dbReference type="HAMAP" id="MF_01813">
    <property type="entry name" value="MenG_UbiE_methyltr"/>
    <property type="match status" value="1"/>
</dbReference>
<dbReference type="InterPro" id="IPR029063">
    <property type="entry name" value="SAM-dependent_MTases_sf"/>
</dbReference>
<dbReference type="InterPro" id="IPR004033">
    <property type="entry name" value="UbiE/COQ5_MeTrFase"/>
</dbReference>
<dbReference type="InterPro" id="IPR023576">
    <property type="entry name" value="UbiE/COQ5_MeTrFase_CS"/>
</dbReference>
<dbReference type="NCBIfam" id="TIGR01934">
    <property type="entry name" value="MenG_MenH_UbiE"/>
    <property type="match status" value="1"/>
</dbReference>
<dbReference type="NCBIfam" id="NF001244">
    <property type="entry name" value="PRK00216.1-5"/>
    <property type="match status" value="1"/>
</dbReference>
<dbReference type="PANTHER" id="PTHR43591:SF24">
    <property type="entry name" value="2-METHOXY-6-POLYPRENYL-1,4-BENZOQUINOL METHYLASE, MITOCHONDRIAL"/>
    <property type="match status" value="1"/>
</dbReference>
<dbReference type="PANTHER" id="PTHR43591">
    <property type="entry name" value="METHYLTRANSFERASE"/>
    <property type="match status" value="1"/>
</dbReference>
<dbReference type="Pfam" id="PF01209">
    <property type="entry name" value="Ubie_methyltran"/>
    <property type="match status" value="1"/>
</dbReference>
<dbReference type="SUPFAM" id="SSF53335">
    <property type="entry name" value="S-adenosyl-L-methionine-dependent methyltransferases"/>
    <property type="match status" value="1"/>
</dbReference>
<dbReference type="PROSITE" id="PS51608">
    <property type="entry name" value="SAM_MT_UBIE"/>
    <property type="match status" value="1"/>
</dbReference>
<dbReference type="PROSITE" id="PS01183">
    <property type="entry name" value="UBIE_1"/>
    <property type="match status" value="1"/>
</dbReference>